<protein>
    <recommendedName>
        <fullName evidence="1">Isoprenyl transferase</fullName>
        <ecNumber evidence="1">2.5.1.-</ecNumber>
    </recommendedName>
</protein>
<sequence>MGLFESNLPKHIAVIMDGNGRWATSRGKSRSEGHREGAQAIDRLMDASLELGLKNISLYAFSTENWKRPVTEIRSIFSLLIEFIETRLDTIHKRGIRILHSGSRKKLTRGVLDKIDFAVDKTQKNKNLTVNFCLNYGSRDELLRAAQELFLERKRSKVALEKPLKEKEFEKFLYTSILPPVDLLIRTAGEQRLSNFLLWQSAYAELYFTDTLWPEFDKNSLVDSLKWYETRTRKFGGLTNG</sequence>
<name>ISPT_LEPIN</name>
<dbReference type="EC" id="2.5.1.-" evidence="1"/>
<dbReference type="EMBL" id="AE010300">
    <property type="protein sequence ID" value="AAN50492.1"/>
    <property type="molecule type" value="Genomic_DNA"/>
</dbReference>
<dbReference type="RefSeq" id="NP_713474.1">
    <property type="nucleotide sequence ID" value="NC_004342.2"/>
</dbReference>
<dbReference type="SMR" id="Q8F144"/>
<dbReference type="FunCoup" id="Q8F144">
    <property type="interactions" value="459"/>
</dbReference>
<dbReference type="STRING" id="189518.LA_3294"/>
<dbReference type="PaxDb" id="189518-LA_3294"/>
<dbReference type="EnsemblBacteria" id="AAN50492">
    <property type="protein sequence ID" value="AAN50492"/>
    <property type="gene ID" value="LA_3294"/>
</dbReference>
<dbReference type="KEGG" id="lil:LA_3294"/>
<dbReference type="PATRIC" id="fig|189518.3.peg.3264"/>
<dbReference type="HOGENOM" id="CLU_038505_1_1_12"/>
<dbReference type="InParanoid" id="Q8F144"/>
<dbReference type="OrthoDB" id="4191603at2"/>
<dbReference type="Proteomes" id="UP000001408">
    <property type="component" value="Chromosome I"/>
</dbReference>
<dbReference type="GO" id="GO:0000287">
    <property type="term" value="F:magnesium ion binding"/>
    <property type="evidence" value="ECO:0007669"/>
    <property type="project" value="UniProtKB-UniRule"/>
</dbReference>
<dbReference type="GO" id="GO:0004659">
    <property type="term" value="F:prenyltransferase activity"/>
    <property type="evidence" value="ECO:0007669"/>
    <property type="project" value="UniProtKB-UniRule"/>
</dbReference>
<dbReference type="GO" id="GO:0016094">
    <property type="term" value="P:polyprenol biosynthetic process"/>
    <property type="evidence" value="ECO:0000318"/>
    <property type="project" value="GO_Central"/>
</dbReference>
<dbReference type="CDD" id="cd00475">
    <property type="entry name" value="Cis_IPPS"/>
    <property type="match status" value="1"/>
</dbReference>
<dbReference type="Gene3D" id="3.40.1180.10">
    <property type="entry name" value="Decaprenyl diphosphate synthase-like"/>
    <property type="match status" value="1"/>
</dbReference>
<dbReference type="HAMAP" id="MF_01139">
    <property type="entry name" value="ISPT"/>
    <property type="match status" value="1"/>
</dbReference>
<dbReference type="InterPro" id="IPR001441">
    <property type="entry name" value="UPP_synth-like"/>
</dbReference>
<dbReference type="InterPro" id="IPR018520">
    <property type="entry name" value="UPP_synth-like_CS"/>
</dbReference>
<dbReference type="InterPro" id="IPR036424">
    <property type="entry name" value="UPP_synth-like_sf"/>
</dbReference>
<dbReference type="NCBIfam" id="NF011415">
    <property type="entry name" value="PRK14842.1"/>
    <property type="match status" value="1"/>
</dbReference>
<dbReference type="NCBIfam" id="TIGR00055">
    <property type="entry name" value="uppS"/>
    <property type="match status" value="1"/>
</dbReference>
<dbReference type="PANTHER" id="PTHR10291:SF0">
    <property type="entry name" value="DEHYDRODOLICHYL DIPHOSPHATE SYNTHASE 2"/>
    <property type="match status" value="1"/>
</dbReference>
<dbReference type="PANTHER" id="PTHR10291">
    <property type="entry name" value="DEHYDRODOLICHYL DIPHOSPHATE SYNTHASE FAMILY MEMBER"/>
    <property type="match status" value="1"/>
</dbReference>
<dbReference type="Pfam" id="PF01255">
    <property type="entry name" value="Prenyltransf"/>
    <property type="match status" value="1"/>
</dbReference>
<dbReference type="SUPFAM" id="SSF64005">
    <property type="entry name" value="Undecaprenyl diphosphate synthase"/>
    <property type="match status" value="1"/>
</dbReference>
<dbReference type="PROSITE" id="PS01066">
    <property type="entry name" value="UPP_SYNTHASE"/>
    <property type="match status" value="1"/>
</dbReference>
<proteinExistence type="inferred from homology"/>
<evidence type="ECO:0000255" key="1">
    <source>
        <dbReference type="HAMAP-Rule" id="MF_01139"/>
    </source>
</evidence>
<reference key="1">
    <citation type="journal article" date="2003" name="Nature">
        <title>Unique physiological and pathogenic features of Leptospira interrogans revealed by whole-genome sequencing.</title>
        <authorList>
            <person name="Ren S.-X."/>
            <person name="Fu G."/>
            <person name="Jiang X.-G."/>
            <person name="Zeng R."/>
            <person name="Miao Y.-G."/>
            <person name="Xu H."/>
            <person name="Zhang Y.-X."/>
            <person name="Xiong H."/>
            <person name="Lu G."/>
            <person name="Lu L.-F."/>
            <person name="Jiang H.-Q."/>
            <person name="Jia J."/>
            <person name="Tu Y.-F."/>
            <person name="Jiang J.-X."/>
            <person name="Gu W.-Y."/>
            <person name="Zhang Y.-Q."/>
            <person name="Cai Z."/>
            <person name="Sheng H.-H."/>
            <person name="Yin H.-F."/>
            <person name="Zhang Y."/>
            <person name="Zhu G.-F."/>
            <person name="Wan M."/>
            <person name="Huang H.-L."/>
            <person name="Qian Z."/>
            <person name="Wang S.-Y."/>
            <person name="Ma W."/>
            <person name="Yao Z.-J."/>
            <person name="Shen Y."/>
            <person name="Qiang B.-Q."/>
            <person name="Xia Q.-C."/>
            <person name="Guo X.-K."/>
            <person name="Danchin A."/>
            <person name="Saint Girons I."/>
            <person name="Somerville R.L."/>
            <person name="Wen Y.-M."/>
            <person name="Shi M.-H."/>
            <person name="Chen Z."/>
            <person name="Xu J.-G."/>
            <person name="Zhao G.-P."/>
        </authorList>
    </citation>
    <scope>NUCLEOTIDE SEQUENCE [LARGE SCALE GENOMIC DNA]</scope>
    <source>
        <strain>56601</strain>
    </source>
</reference>
<comment type="function">
    <text evidence="1">Catalyzes the condensation of isopentenyl diphosphate (IPP) with allylic pyrophosphates generating different type of terpenoids.</text>
</comment>
<comment type="cofactor">
    <cofactor evidence="1">
        <name>Mg(2+)</name>
        <dbReference type="ChEBI" id="CHEBI:18420"/>
    </cofactor>
    <text evidence="1">Binds 2 magnesium ions per subunit.</text>
</comment>
<comment type="subunit">
    <text evidence="1">Homodimer.</text>
</comment>
<comment type="similarity">
    <text evidence="1">Belongs to the UPP synthase family.</text>
</comment>
<keyword id="KW-0460">Magnesium</keyword>
<keyword id="KW-0479">Metal-binding</keyword>
<keyword id="KW-1185">Reference proteome</keyword>
<keyword id="KW-0808">Transferase</keyword>
<feature type="chain" id="PRO_0000123633" description="Isoprenyl transferase">
    <location>
        <begin position="1"/>
        <end position="241"/>
    </location>
</feature>
<feature type="active site" evidence="1">
    <location>
        <position position="17"/>
    </location>
</feature>
<feature type="active site" description="Proton acceptor" evidence="1">
    <location>
        <position position="65"/>
    </location>
</feature>
<feature type="binding site" evidence="1">
    <location>
        <position position="17"/>
    </location>
    <ligand>
        <name>Mg(2+)</name>
        <dbReference type="ChEBI" id="CHEBI:18420"/>
    </ligand>
</feature>
<feature type="binding site" evidence="1">
    <location>
        <begin position="18"/>
        <end position="21"/>
    </location>
    <ligand>
        <name>substrate</name>
    </ligand>
</feature>
<feature type="binding site" evidence="1">
    <location>
        <position position="22"/>
    </location>
    <ligand>
        <name>substrate</name>
    </ligand>
</feature>
<feature type="binding site" evidence="1">
    <location>
        <position position="30"/>
    </location>
    <ligand>
        <name>substrate</name>
    </ligand>
</feature>
<feature type="binding site" evidence="1">
    <location>
        <position position="34"/>
    </location>
    <ligand>
        <name>substrate</name>
    </ligand>
</feature>
<feature type="binding site" evidence="1">
    <location>
        <begin position="62"/>
        <end position="64"/>
    </location>
    <ligand>
        <name>substrate</name>
    </ligand>
</feature>
<feature type="binding site" evidence="1">
    <location>
        <position position="66"/>
    </location>
    <ligand>
        <name>substrate</name>
    </ligand>
</feature>
<feature type="binding site" evidence="1">
    <location>
        <position position="68"/>
    </location>
    <ligand>
        <name>substrate</name>
    </ligand>
</feature>
<feature type="binding site" evidence="1">
    <location>
        <position position="186"/>
    </location>
    <ligand>
        <name>substrate</name>
    </ligand>
</feature>
<feature type="binding site" evidence="1">
    <location>
        <begin position="192"/>
        <end position="194"/>
    </location>
    <ligand>
        <name>substrate</name>
    </ligand>
</feature>
<feature type="binding site" evidence="1">
    <location>
        <position position="205"/>
    </location>
    <ligand>
        <name>Mg(2+)</name>
        <dbReference type="ChEBI" id="CHEBI:18420"/>
    </ligand>
</feature>
<gene>
    <name evidence="1" type="primary">uppS</name>
    <name type="ordered locus">LA_3294</name>
</gene>
<accession>Q8F144</accession>
<organism>
    <name type="scientific">Leptospira interrogans serogroup Icterohaemorrhagiae serovar Lai (strain 56601)</name>
    <dbReference type="NCBI Taxonomy" id="189518"/>
    <lineage>
        <taxon>Bacteria</taxon>
        <taxon>Pseudomonadati</taxon>
        <taxon>Spirochaetota</taxon>
        <taxon>Spirochaetia</taxon>
        <taxon>Leptospirales</taxon>
        <taxon>Leptospiraceae</taxon>
        <taxon>Leptospira</taxon>
    </lineage>
</organism>